<organismHost>
    <name type="scientific">Lepidoptera</name>
    <name type="common">butterflies and moths</name>
    <dbReference type="NCBI Taxonomy" id="7088"/>
</organismHost>
<accession>P41702</accession>
<organism>
    <name type="scientific">Autographa californica nuclear polyhedrosis virus</name>
    <name type="common">AcMNPV</name>
    <dbReference type="NCBI Taxonomy" id="46015"/>
    <lineage>
        <taxon>Viruses</taxon>
        <taxon>Viruses incertae sedis</taxon>
        <taxon>Naldaviricetes</taxon>
        <taxon>Lefavirales</taxon>
        <taxon>Baculoviridae</taxon>
        <taxon>Alphabaculovirus</taxon>
        <taxon>Alphabaculovirus aucalifornicae</taxon>
    </lineage>
</organism>
<sequence length="290" mass="33528">MKRIKCNKVRTVTEIVNSDEKIQKTYELAEFDLKNLSSLESYETLKIKLALSKYMAMLSTLEMTQPLLEIFRNKADTRQIAAVVFSTLAFIHNRFHPLVTNFTNKMEFVVTETNDTSIPGEPILFTENEGVLLCSVDRPSIVKMLSREFDTEALVNFENDNCNVRIAKTFGASKRKNTTRSDDYESNKQPNYDMDLSDFSITEVEATQYLTLLLTVEHAYLHYYIFKNYGVFEYCKSLTDHSLFTNKLRSTMSTKTSNLLLSKFKFTIEDFDKINSNSVTSGFNIYNFNK</sequence>
<evidence type="ECO:0000269" key="1">
    <source>
    </source>
</evidence>
<evidence type="ECO:0000269" key="2">
    <source>
    </source>
</evidence>
<evidence type="ECO:0000269" key="3">
    <source>
    </source>
</evidence>
<evidence type="ECO:0000305" key="4"/>
<feature type="chain" id="PRO_0000132921" description="Occlusion-derived virus envelope protein E27">
    <location>
        <begin position="1"/>
        <end position="290"/>
    </location>
</feature>
<dbReference type="EMBL" id="L22858">
    <property type="protein sequence ID" value="AAA66774.1"/>
    <property type="molecule type" value="Genomic_DNA"/>
</dbReference>
<dbReference type="EMBL" id="U04051">
    <property type="protein sequence ID" value="AAA03636.1"/>
    <property type="status" value="ALT_INIT"/>
    <property type="molecule type" value="Unassigned_DNA"/>
</dbReference>
<dbReference type="PIR" id="B72868">
    <property type="entry name" value="B72868"/>
</dbReference>
<dbReference type="PDB" id="8I8B">
    <property type="method" value="EM"/>
    <property type="resolution" value="4.31 A"/>
    <property type="chains" value="H/I=1-290"/>
</dbReference>
<dbReference type="PDB" id="8I8C">
    <property type="method" value="EM"/>
    <property type="resolution" value="4.93 A"/>
    <property type="chains" value="M/N=1-290"/>
</dbReference>
<dbReference type="PDB" id="8VWI">
    <property type="method" value="EM"/>
    <property type="resolution" value="4.71 A"/>
    <property type="chains" value="J/M/Q/S/e/h=1-290"/>
</dbReference>
<dbReference type="PDB" id="8VWJ">
    <property type="method" value="EM"/>
    <property type="resolution" value="4.78 A"/>
    <property type="chains" value="J/M/Q/S/e/h=1-290"/>
</dbReference>
<dbReference type="PDBsum" id="8I8B"/>
<dbReference type="PDBsum" id="8I8C"/>
<dbReference type="PDBsum" id="8VWI"/>
<dbReference type="PDBsum" id="8VWJ"/>
<dbReference type="EMDB" id="EMD-43588"/>
<dbReference type="EMDB" id="EMD-43589"/>
<dbReference type="SMR" id="P41702"/>
<dbReference type="KEGG" id="vg:1403977"/>
<dbReference type="OrthoDB" id="10588at10239"/>
<dbReference type="Proteomes" id="UP000008292">
    <property type="component" value="Segment"/>
</dbReference>
<dbReference type="GO" id="GO:0016020">
    <property type="term" value="C:membrane"/>
    <property type="evidence" value="ECO:0007669"/>
    <property type="project" value="UniProtKB-KW"/>
</dbReference>
<dbReference type="GO" id="GO:0019031">
    <property type="term" value="C:viral envelope"/>
    <property type="evidence" value="ECO:0007669"/>
    <property type="project" value="UniProtKB-KW"/>
</dbReference>
<dbReference type="GO" id="GO:0055036">
    <property type="term" value="C:virion membrane"/>
    <property type="evidence" value="ECO:0007669"/>
    <property type="project" value="UniProtKB-SubCell"/>
</dbReference>
<dbReference type="GO" id="GO:0044071">
    <property type="term" value="P:symbiont-mediated perturbation of host cell cycle progression"/>
    <property type="evidence" value="ECO:0007669"/>
    <property type="project" value="UniProtKB-KW"/>
</dbReference>
<dbReference type="InterPro" id="IPR007978">
    <property type="entry name" value="Baculo_ODV-E27"/>
</dbReference>
<dbReference type="Pfam" id="PF05314">
    <property type="entry name" value="Baculo_ODV-E27"/>
    <property type="match status" value="1"/>
</dbReference>
<proteinExistence type="evidence at protein level"/>
<comment type="function">
    <text evidence="3">Acts as a cyclin-like protein and plays a role in the modulation of host cell cycle. May promote G2/S arrest by interacting with host mus209/PCNA, cdc2 and cdk6. The cell cycle arrest is characterized by an intact nuclear envelope, concomitant with sustained activity of host cdc2. However, viral DNA replication still occurs in the arrested cells.</text>
</comment>
<comment type="subunit">
    <text evidence="1 3">Interacts with host mus209/PCNA, cdc2 and cdk6. Forms a complex with proteins C42 and p78/83.</text>
</comment>
<comment type="subcellular location">
    <subcellularLocation>
        <location evidence="2">Virion membrane</location>
    </subcellularLocation>
</comment>
<comment type="similarity">
    <text evidence="4">Belongs to the baculoviridae E27 family.</text>
</comment>
<comment type="sequence caution" evidence="4">
    <conflict type="erroneous initiation">
        <sequence resource="EMBL-CDS" id="AAA03636"/>
    </conflict>
</comment>
<name>E27_NPVAC</name>
<gene>
    <name type="primary">E27</name>
    <name type="ORF">ORF144</name>
</gene>
<protein>
    <recommendedName>
        <fullName>Occlusion-derived virus envelope protein E27</fullName>
        <shortName>ODV-E27</shortName>
    </recommendedName>
</protein>
<reference key="1">
    <citation type="journal article" date="1994" name="Virology">
        <title>The complete DNA sequence of Autographa californica nuclear polyhedrosis virus.</title>
        <authorList>
            <person name="Ayres M.D."/>
            <person name="Howard S.C."/>
            <person name="Kuzio J."/>
            <person name="Lopez-Ferber M."/>
            <person name="Possee R.D."/>
        </authorList>
    </citation>
    <scope>NUCLEOTIDE SEQUENCE [LARGE SCALE GENOMIC DNA]</scope>
    <source>
        <strain>C6</strain>
    </source>
</reference>
<reference key="2">
    <citation type="submission" date="1993-12" db="EMBL/GenBank/DDBJ databases">
        <authorList>
            <person name="Ramamurthy P."/>
            <person name="Braunagel S.C."/>
            <person name="Summers M.D."/>
        </authorList>
    </citation>
    <scope>NUCLEOTIDE SEQUENCE</scope>
    <source>
        <strain>E2</strain>
    </source>
</reference>
<reference key="3">
    <citation type="journal article" date="1996" name="Virology">
        <title>Transcription, translation, and cellular localization of three Autographa californica nuclear polyhedrosis virus structural proteins: ODV-E18, ODV-E35, and ODV-EC27.</title>
        <authorList>
            <person name="Braunagel S.C."/>
            <person name="He H."/>
            <person name="Ramamurthy P."/>
            <person name="Summers M.D."/>
        </authorList>
    </citation>
    <scope>SUBCELLULAR LOCATION</scope>
</reference>
<reference key="4">
    <citation type="journal article" date="1998" name="Proc. Natl. Acad. Sci. U.S.A.">
        <title>The structural protein ODV-EC27 of Autographa californica nucleopolyhedrovirus is a multifunctional viral cyclin.</title>
        <authorList>
            <person name="Belyavskyi M."/>
            <person name="Braunagel S.C."/>
            <person name="Summers M.D."/>
        </authorList>
    </citation>
    <scope>FUNCTION</scope>
    <scope>INTERACTION WITH HOST MUS209; CDC2 AND CDK6</scope>
</reference>
<reference key="5">
    <citation type="journal article" date="2001" name="J. Virol.">
        <title>Identification of BV/ODV-C42, an Autographa californica nucleopolyhedrovirus orf101-encoded structural protein detected in infected-cell complexes with ODV-EC27 and p78/83.</title>
        <authorList>
            <person name="Braunagel S.C."/>
            <person name="Guidry P.A."/>
            <person name="Rosas-Acosta G."/>
            <person name="Engelking L."/>
            <person name="Summers M.D."/>
        </authorList>
    </citation>
    <scope>INTERACTION WITH P78/83 AND C42</scope>
</reference>
<keyword id="KW-0002">3D-structure</keyword>
<keyword id="KW-0945">Host-virus interaction</keyword>
<keyword id="KW-0472">Membrane</keyword>
<keyword id="KW-1120">Modulation of host cell cycle by viral cyclin-like protein</keyword>
<keyword id="KW-1121">Modulation of host cell cycle by virus</keyword>
<keyword id="KW-1185">Reference proteome</keyword>
<keyword id="KW-0261">Viral envelope protein</keyword>
<keyword id="KW-0946">Virion</keyword>